<evidence type="ECO:0000255" key="1">
    <source>
        <dbReference type="HAMAP-Rule" id="MF_00532"/>
    </source>
</evidence>
<evidence type="ECO:0000305" key="2"/>
<sequence>MAEINSLSELSMATSITEPHENVVPVHVQKLDSQGRAYATGKRKDAVARVWIKPGSGKIIINNKEFDKYFARPVLRMILRQPIVATNRDTQFDIVATVAGGGLSGQAGAIRHGISKALTYYEPELRPILKKGGFLTRDSRVVERKKYGKAKARRSFQFSKR</sequence>
<comment type="similarity">
    <text evidence="1">Belongs to the universal ribosomal protein uS9 family.</text>
</comment>
<organism>
    <name type="scientific">Bartonella tribocorum (strain CIP 105476 / IBS 506)</name>
    <dbReference type="NCBI Taxonomy" id="382640"/>
    <lineage>
        <taxon>Bacteria</taxon>
        <taxon>Pseudomonadati</taxon>
        <taxon>Pseudomonadota</taxon>
        <taxon>Alphaproteobacteria</taxon>
        <taxon>Hyphomicrobiales</taxon>
        <taxon>Bartonellaceae</taxon>
        <taxon>Bartonella</taxon>
    </lineage>
</organism>
<accession>A9IVX6</accession>
<gene>
    <name evidence="1" type="primary">rpsI</name>
    <name type="ordered locus">BT_1476</name>
</gene>
<reference key="1">
    <citation type="journal article" date="2007" name="Nat. Genet.">
        <title>Genomic analysis of Bartonella identifies type IV secretion systems as host adaptability factors.</title>
        <authorList>
            <person name="Saenz H.L."/>
            <person name="Engel P."/>
            <person name="Stoeckli M.C."/>
            <person name="Lanz C."/>
            <person name="Raddatz G."/>
            <person name="Vayssier-Taussat M."/>
            <person name="Birtles R."/>
            <person name="Schuster S.C."/>
            <person name="Dehio C."/>
        </authorList>
    </citation>
    <scope>NUCLEOTIDE SEQUENCE [LARGE SCALE GENOMIC DNA]</scope>
    <source>
        <strain>CIP 105476 / IBS 506</strain>
    </source>
</reference>
<proteinExistence type="inferred from homology"/>
<keyword id="KW-0687">Ribonucleoprotein</keyword>
<keyword id="KW-0689">Ribosomal protein</keyword>
<dbReference type="EMBL" id="AM260525">
    <property type="protein sequence ID" value="CAK01825.1"/>
    <property type="molecule type" value="Genomic_DNA"/>
</dbReference>
<dbReference type="RefSeq" id="WP_012231965.1">
    <property type="nucleotide sequence ID" value="NC_010161.1"/>
</dbReference>
<dbReference type="SMR" id="A9IVX6"/>
<dbReference type="KEGG" id="btr:BT_1476"/>
<dbReference type="eggNOG" id="COG0103">
    <property type="taxonomic scope" value="Bacteria"/>
</dbReference>
<dbReference type="HOGENOM" id="CLU_046483_2_0_5"/>
<dbReference type="Proteomes" id="UP000001592">
    <property type="component" value="Chromosome"/>
</dbReference>
<dbReference type="GO" id="GO:0022627">
    <property type="term" value="C:cytosolic small ribosomal subunit"/>
    <property type="evidence" value="ECO:0007669"/>
    <property type="project" value="TreeGrafter"/>
</dbReference>
<dbReference type="GO" id="GO:0003723">
    <property type="term" value="F:RNA binding"/>
    <property type="evidence" value="ECO:0007669"/>
    <property type="project" value="TreeGrafter"/>
</dbReference>
<dbReference type="GO" id="GO:0003735">
    <property type="term" value="F:structural constituent of ribosome"/>
    <property type="evidence" value="ECO:0007669"/>
    <property type="project" value="InterPro"/>
</dbReference>
<dbReference type="GO" id="GO:0006412">
    <property type="term" value="P:translation"/>
    <property type="evidence" value="ECO:0007669"/>
    <property type="project" value="UniProtKB-UniRule"/>
</dbReference>
<dbReference type="FunFam" id="3.30.230.10:FF:000034">
    <property type="entry name" value="30S ribosomal protein S9"/>
    <property type="match status" value="1"/>
</dbReference>
<dbReference type="Gene3D" id="3.30.230.10">
    <property type="match status" value="1"/>
</dbReference>
<dbReference type="HAMAP" id="MF_00532_B">
    <property type="entry name" value="Ribosomal_uS9_B"/>
    <property type="match status" value="1"/>
</dbReference>
<dbReference type="InterPro" id="IPR020568">
    <property type="entry name" value="Ribosomal_Su5_D2-typ_SF"/>
</dbReference>
<dbReference type="InterPro" id="IPR000754">
    <property type="entry name" value="Ribosomal_uS9"/>
</dbReference>
<dbReference type="InterPro" id="IPR023035">
    <property type="entry name" value="Ribosomal_uS9_bac/plastid"/>
</dbReference>
<dbReference type="InterPro" id="IPR020574">
    <property type="entry name" value="Ribosomal_uS9_CS"/>
</dbReference>
<dbReference type="InterPro" id="IPR014721">
    <property type="entry name" value="Ribsml_uS5_D2-typ_fold_subgr"/>
</dbReference>
<dbReference type="NCBIfam" id="NF001099">
    <property type="entry name" value="PRK00132.1"/>
    <property type="match status" value="1"/>
</dbReference>
<dbReference type="PANTHER" id="PTHR21569">
    <property type="entry name" value="RIBOSOMAL PROTEIN S9"/>
    <property type="match status" value="1"/>
</dbReference>
<dbReference type="PANTHER" id="PTHR21569:SF1">
    <property type="entry name" value="SMALL RIBOSOMAL SUBUNIT PROTEIN US9M"/>
    <property type="match status" value="1"/>
</dbReference>
<dbReference type="Pfam" id="PF00380">
    <property type="entry name" value="Ribosomal_S9"/>
    <property type="match status" value="1"/>
</dbReference>
<dbReference type="SUPFAM" id="SSF54211">
    <property type="entry name" value="Ribosomal protein S5 domain 2-like"/>
    <property type="match status" value="1"/>
</dbReference>
<dbReference type="PROSITE" id="PS00360">
    <property type="entry name" value="RIBOSOMAL_S9"/>
    <property type="match status" value="1"/>
</dbReference>
<name>RS9_BART1</name>
<protein>
    <recommendedName>
        <fullName evidence="1">Small ribosomal subunit protein uS9</fullName>
    </recommendedName>
    <alternativeName>
        <fullName evidence="2">30S ribosomal protein S9</fullName>
    </alternativeName>
</protein>
<feature type="chain" id="PRO_1000081803" description="Small ribosomal subunit protein uS9">
    <location>
        <begin position="1"/>
        <end position="161"/>
    </location>
</feature>